<feature type="transit peptide" description="Mitochondrion" evidence="2">
    <location>
        <begin position="1"/>
        <end position="24"/>
    </location>
</feature>
<feature type="chain" id="PRO_0000030679" description="Cytochrome b-c1 complex subunit Rieske-4, mitochondrial">
    <location>
        <begin position="25"/>
        <end position="236"/>
    </location>
</feature>
<feature type="topological domain" description="Mitochondrial matrix" evidence="4">
    <location>
        <begin position="25"/>
        <end position="73"/>
    </location>
</feature>
<feature type="transmembrane region" description="Helical" evidence="2">
    <location>
        <begin position="74"/>
        <end position="96"/>
    </location>
</feature>
<feature type="topological domain" description="Mitochondrial intermembrane" evidence="4">
    <location>
        <begin position="97"/>
        <end position="236"/>
    </location>
</feature>
<feature type="domain" description="Rieske" evidence="3">
    <location>
        <begin position="146"/>
        <end position="234"/>
    </location>
</feature>
<feature type="binding site" evidence="3">
    <location>
        <position position="179"/>
    </location>
    <ligand>
        <name>[2Fe-2S] cluster</name>
        <dbReference type="ChEBI" id="CHEBI:190135"/>
    </ligand>
</feature>
<feature type="binding site" evidence="3">
    <location>
        <position position="181"/>
    </location>
    <ligand>
        <name>[2Fe-2S] cluster</name>
        <dbReference type="ChEBI" id="CHEBI:190135"/>
    </ligand>
</feature>
<feature type="binding site" evidence="3">
    <location>
        <position position="198"/>
    </location>
    <ligand>
        <name>[2Fe-2S] cluster</name>
        <dbReference type="ChEBI" id="CHEBI:190135"/>
    </ligand>
</feature>
<feature type="binding site" evidence="3">
    <location>
        <position position="201"/>
    </location>
    <ligand>
        <name>[2Fe-2S] cluster</name>
        <dbReference type="ChEBI" id="CHEBI:190135"/>
    </ligand>
</feature>
<feature type="disulfide bond" evidence="3">
    <location>
        <begin position="184"/>
        <end position="200"/>
    </location>
</feature>
<name>UCRI4_TOBAC</name>
<keyword id="KW-0001">2Fe-2S</keyword>
<keyword id="KW-1015">Disulfide bond</keyword>
<keyword id="KW-0249">Electron transport</keyword>
<keyword id="KW-0408">Iron</keyword>
<keyword id="KW-0411">Iron-sulfur</keyword>
<keyword id="KW-0472">Membrane</keyword>
<keyword id="KW-0479">Metal-binding</keyword>
<keyword id="KW-0496">Mitochondrion</keyword>
<keyword id="KW-0999">Mitochondrion inner membrane</keyword>
<keyword id="KW-1185">Reference proteome</keyword>
<keyword id="KW-0679">Respiratory chain</keyword>
<keyword id="KW-0809">Transit peptide</keyword>
<keyword id="KW-1278">Translocase</keyword>
<keyword id="KW-0812">Transmembrane</keyword>
<keyword id="KW-1133">Transmembrane helix</keyword>
<keyword id="KW-0813">Transport</keyword>
<evidence type="ECO:0000250" key="1">
    <source>
        <dbReference type="UniProtKB" id="P08067"/>
    </source>
</evidence>
<evidence type="ECO:0000255" key="2"/>
<evidence type="ECO:0000255" key="3">
    <source>
        <dbReference type="PROSITE-ProRule" id="PRU00628"/>
    </source>
</evidence>
<evidence type="ECO:0000305" key="4"/>
<organism>
    <name type="scientific">Nicotiana tabacum</name>
    <name type="common">Common tobacco</name>
    <dbReference type="NCBI Taxonomy" id="4097"/>
    <lineage>
        <taxon>Eukaryota</taxon>
        <taxon>Viridiplantae</taxon>
        <taxon>Streptophyta</taxon>
        <taxon>Embryophyta</taxon>
        <taxon>Tracheophyta</taxon>
        <taxon>Spermatophyta</taxon>
        <taxon>Magnoliopsida</taxon>
        <taxon>eudicotyledons</taxon>
        <taxon>Gunneridae</taxon>
        <taxon>Pentapetalae</taxon>
        <taxon>asterids</taxon>
        <taxon>lamiids</taxon>
        <taxon>Solanales</taxon>
        <taxon>Solanaceae</taxon>
        <taxon>Nicotianoideae</taxon>
        <taxon>Nicotianeae</taxon>
        <taxon>Nicotiana</taxon>
    </lineage>
</organism>
<protein>
    <recommendedName>
        <fullName>Cytochrome b-c1 complex subunit Rieske-4, mitochondrial</fullName>
        <ecNumber>7.1.1.8</ecNumber>
    </recommendedName>
    <alternativeName>
        <fullName>Complex III subunit 5-4</fullName>
    </alternativeName>
    <alternativeName>
        <fullName>Rieske iron-sulfur protein 4</fullName>
        <shortName>RISP4</shortName>
    </alternativeName>
    <alternativeName>
        <fullName>Ubiquinol-cytochrome c reductase iron-sulfur subunit 4</fullName>
    </alternativeName>
</protein>
<reference key="1">
    <citation type="journal article" date="1994" name="Plant Cell">
        <title>Flower-enhanced expression of a nuclear-encoded mitochondrial respiratory protein is associated with changes in mitochondrion number.</title>
        <authorList>
            <person name="Huang J."/>
            <person name="Struck F."/>
            <person name="Matzinger D.F."/>
            <person name="Levings C.S. III"/>
        </authorList>
    </citation>
    <scope>NUCLEOTIDE SEQUENCE [MRNA]</scope>
    <source>
        <strain>cv. SC58</strain>
        <tissue>Flower</tissue>
    </source>
</reference>
<comment type="function">
    <text evidence="1">Component of the ubiquinol-cytochrome c oxidoreductase, a multisubunit transmembrane complex that is part of the mitochondrial electron transport chain which drives oxidative phosphorylation. The respiratory chain contains 3 multisubunit complexes succinate dehydrogenase (complex II, CII), ubiquinol-cytochrome c oxidoreductase (cytochrome b-c1 complex, complex III, CIII) and cytochrome c oxidase (complex IV, CIV), that cooperate to transfer electrons derived from NADH and succinate to molecular oxygen, creating an electrochemical gradient over the inner membrane that drives transmembrane transport and the ATP synthase. The cytochrome b-c1 complex catalyzes electron transfer from ubiquinol to cytochrome c, linking this redox reaction to translocation of protons across the mitochondrial inner membrane, with protons being carried across the membrane as hydrogens on the quinol. In the process called Q cycle, 2 protons are consumed from the matrix, 4 protons are released into the intermembrane space and 2 electrons are passed to cytochrome c. The Rieske protein is a catalytic core subunit containing a [2Fe-2S] iron-sulfur cluster. It cycles between 2 conformational states during catalysis to transfer electrons from the quinol bound in the Q(0) site in cytochrome b to cytochrome c1.</text>
</comment>
<comment type="catalytic activity">
    <reaction evidence="1">
        <text>a quinol + 2 Fe(III)-[cytochrome c](out) = a quinone + 2 Fe(II)-[cytochrome c](out) + 2 H(+)(out)</text>
        <dbReference type="Rhea" id="RHEA:11484"/>
        <dbReference type="Rhea" id="RHEA-COMP:10350"/>
        <dbReference type="Rhea" id="RHEA-COMP:14399"/>
        <dbReference type="ChEBI" id="CHEBI:15378"/>
        <dbReference type="ChEBI" id="CHEBI:24646"/>
        <dbReference type="ChEBI" id="CHEBI:29033"/>
        <dbReference type="ChEBI" id="CHEBI:29034"/>
        <dbReference type="ChEBI" id="CHEBI:132124"/>
        <dbReference type="EC" id="7.1.1.8"/>
    </reaction>
</comment>
<comment type="cofactor">
    <cofactor evidence="3">
        <name>[2Fe-2S] cluster</name>
        <dbReference type="ChEBI" id="CHEBI:190135"/>
    </cofactor>
    <text evidence="3">Binds 1 [2Fe-2S] cluster per subunit.</text>
</comment>
<comment type="subunit">
    <text evidence="1">Component of the ubiquinol-cytochrome c oxidoreductase (cytochrome b-c1 complex, complex III, CIII), a multisubunit enzyme composed of 3 respiratory subunits cytochrome b, cytochrome c1 and Rieske protein, 2 core protein subunits, and several low-molecular weight protein subunits. The complex exists as an obligatory dimer and forms supercomplexes (SCs) in the inner mitochondrial membrane with cytochrome c oxidase (complex IV, CIV).</text>
</comment>
<comment type="subcellular location">
    <subcellularLocation>
        <location evidence="1">Mitochondrion inner membrane</location>
        <topology evidence="1">Single-pass membrane protein</topology>
    </subcellularLocation>
</comment>
<comment type="miscellaneous">
    <text>The Rieske protein is a high potential 2Fe-2S protein.</text>
</comment>
<comment type="similarity">
    <text evidence="4">Belongs to the Rieske iron-sulfur protein family.</text>
</comment>
<sequence>MINFGSCWGLASVTSNSFSIISGFSSNSVSHAHDMGLVPDLPPTVAAIKNPTSKIVYDEHNHERYPPGDPSKRAFAYFVLTGGRFVYASLVRLLILKFVLSMSASKDVLALASLEVDLSSIEPGTTVTVKWRGKPVFIRRRTEDDINLANSVDLGSLRDPQQDAERVKSPEWLVVIGVCTHLGCIPLPNAGDFGGWFCPCHGSHYDISGRIRKGPAPYNLEVPTYSFLEENKLLIG</sequence>
<accession>P51134</accession>
<proteinExistence type="evidence at transcript level"/>
<dbReference type="EC" id="7.1.1.8"/>
<dbReference type="EMBL" id="L16812">
    <property type="protein sequence ID" value="AAA20833.1"/>
    <property type="molecule type" value="mRNA"/>
</dbReference>
<dbReference type="PIR" id="T02020">
    <property type="entry name" value="T02020"/>
</dbReference>
<dbReference type="RefSeq" id="NP_001312342.1">
    <property type="nucleotide sequence ID" value="NM_001325413.1"/>
</dbReference>
<dbReference type="SMR" id="P51134"/>
<dbReference type="STRING" id="4097.P51134"/>
<dbReference type="PaxDb" id="4097-P51134"/>
<dbReference type="GeneID" id="107786155"/>
<dbReference type="KEGG" id="nta:107786155"/>
<dbReference type="OrthoDB" id="1637982at2759"/>
<dbReference type="Proteomes" id="UP000084051">
    <property type="component" value="Unplaced"/>
</dbReference>
<dbReference type="GO" id="GO:0005743">
    <property type="term" value="C:mitochondrial inner membrane"/>
    <property type="evidence" value="ECO:0007669"/>
    <property type="project" value="UniProtKB-SubCell"/>
</dbReference>
<dbReference type="GO" id="GO:0045275">
    <property type="term" value="C:respiratory chain complex III"/>
    <property type="evidence" value="ECO:0000318"/>
    <property type="project" value="GO_Central"/>
</dbReference>
<dbReference type="GO" id="GO:0051537">
    <property type="term" value="F:2 iron, 2 sulfur cluster binding"/>
    <property type="evidence" value="ECO:0007669"/>
    <property type="project" value="UniProtKB-KW"/>
</dbReference>
<dbReference type="GO" id="GO:0046872">
    <property type="term" value="F:metal ion binding"/>
    <property type="evidence" value="ECO:0007669"/>
    <property type="project" value="UniProtKB-KW"/>
</dbReference>
<dbReference type="GO" id="GO:0016491">
    <property type="term" value="F:oxidoreductase activity"/>
    <property type="evidence" value="ECO:0000318"/>
    <property type="project" value="GO_Central"/>
</dbReference>
<dbReference type="GO" id="GO:0008121">
    <property type="term" value="F:ubiquinol-cytochrome-c reductase activity"/>
    <property type="evidence" value="ECO:0007669"/>
    <property type="project" value="UniProtKB-EC"/>
</dbReference>
<dbReference type="GO" id="GO:0006122">
    <property type="term" value="P:mitochondrial electron transport, ubiquinol to cytochrome c"/>
    <property type="evidence" value="ECO:0000318"/>
    <property type="project" value="GO_Central"/>
</dbReference>
<dbReference type="CDD" id="cd03470">
    <property type="entry name" value="Rieske_cytochrome_bc1"/>
    <property type="match status" value="1"/>
</dbReference>
<dbReference type="FunFam" id="2.102.10.10:FF:000001">
    <property type="entry name" value="Cytochrome b-c1 complex subunit Rieske, mitochondrial"/>
    <property type="match status" value="1"/>
</dbReference>
<dbReference type="Gene3D" id="2.102.10.10">
    <property type="entry name" value="Rieske [2Fe-2S] iron-sulphur domain"/>
    <property type="match status" value="1"/>
</dbReference>
<dbReference type="InterPro" id="IPR017941">
    <property type="entry name" value="Rieske_2Fe-2S"/>
</dbReference>
<dbReference type="InterPro" id="IPR036922">
    <property type="entry name" value="Rieske_2Fe-2S_sf"/>
</dbReference>
<dbReference type="InterPro" id="IPR014349">
    <property type="entry name" value="Rieske_Fe-S_prot"/>
</dbReference>
<dbReference type="InterPro" id="IPR005805">
    <property type="entry name" value="Rieske_Fe-S_prot_C"/>
</dbReference>
<dbReference type="InterPro" id="IPR004192">
    <property type="entry name" value="Rieske_TM"/>
</dbReference>
<dbReference type="InterPro" id="IPR006317">
    <property type="entry name" value="Ubiquinol_cyt_c_Rdtase_Fe-S-su"/>
</dbReference>
<dbReference type="NCBIfam" id="TIGR01416">
    <property type="entry name" value="Rieske_proteo"/>
    <property type="match status" value="1"/>
</dbReference>
<dbReference type="PANTHER" id="PTHR10134">
    <property type="entry name" value="CYTOCHROME B-C1 COMPLEX SUBUNIT RIESKE, MITOCHONDRIAL"/>
    <property type="match status" value="1"/>
</dbReference>
<dbReference type="Pfam" id="PF00355">
    <property type="entry name" value="Rieske"/>
    <property type="match status" value="1"/>
</dbReference>
<dbReference type="Pfam" id="PF02921">
    <property type="entry name" value="UCR_TM"/>
    <property type="match status" value="1"/>
</dbReference>
<dbReference type="PRINTS" id="PR00162">
    <property type="entry name" value="RIESKE"/>
</dbReference>
<dbReference type="SUPFAM" id="SSF50022">
    <property type="entry name" value="ISP domain"/>
    <property type="match status" value="1"/>
</dbReference>
<dbReference type="SUPFAM" id="SSF81502">
    <property type="entry name" value="ISP transmembrane anchor"/>
    <property type="match status" value="1"/>
</dbReference>
<dbReference type="PROSITE" id="PS51296">
    <property type="entry name" value="RIESKE"/>
    <property type="match status" value="1"/>
</dbReference>